<proteinExistence type="inferred from homology"/>
<organism>
    <name type="scientific">Rhizobium leguminosarum bv. trifolii (strain WSM2304)</name>
    <dbReference type="NCBI Taxonomy" id="395492"/>
    <lineage>
        <taxon>Bacteria</taxon>
        <taxon>Pseudomonadati</taxon>
        <taxon>Pseudomonadota</taxon>
        <taxon>Alphaproteobacteria</taxon>
        <taxon>Hyphomicrobiales</taxon>
        <taxon>Rhizobiaceae</taxon>
        <taxon>Rhizobium/Agrobacterium group</taxon>
        <taxon>Rhizobium</taxon>
    </lineage>
</organism>
<keyword id="KW-1185">Reference proteome</keyword>
<gene>
    <name type="ordered locus">Rleg2_4331</name>
</gene>
<comment type="similarity">
    <text evidence="1">Belongs to the UPF0102 family.</text>
</comment>
<sequence>MADNDRTALRRKALRRGLMSEYVAAVFLMLKGYRILALRHRTRLGEIDIIARKGDLAVFVEVKARHGEAAAVDAVSVIAQKRIRAASDLWLARQADQARLSQRYDIVAVMPGRLPRHFPDAF</sequence>
<name>Y4331_RHILW</name>
<dbReference type="EMBL" id="CP001191">
    <property type="protein sequence ID" value="ACI57589.1"/>
    <property type="molecule type" value="Genomic_DNA"/>
</dbReference>
<dbReference type="RefSeq" id="WP_012559692.1">
    <property type="nucleotide sequence ID" value="NC_011369.1"/>
</dbReference>
<dbReference type="SMR" id="B5ZYH2"/>
<dbReference type="STRING" id="395492.Rleg2_4331"/>
<dbReference type="KEGG" id="rlt:Rleg2_4331"/>
<dbReference type="eggNOG" id="COG0792">
    <property type="taxonomic scope" value="Bacteria"/>
</dbReference>
<dbReference type="HOGENOM" id="CLU_115353_0_2_5"/>
<dbReference type="Proteomes" id="UP000008330">
    <property type="component" value="Chromosome"/>
</dbReference>
<dbReference type="GO" id="GO:0003676">
    <property type="term" value="F:nucleic acid binding"/>
    <property type="evidence" value="ECO:0007669"/>
    <property type="project" value="InterPro"/>
</dbReference>
<dbReference type="Gene3D" id="3.40.1350.10">
    <property type="match status" value="1"/>
</dbReference>
<dbReference type="HAMAP" id="MF_00048">
    <property type="entry name" value="UPF0102"/>
    <property type="match status" value="1"/>
</dbReference>
<dbReference type="InterPro" id="IPR011335">
    <property type="entry name" value="Restrct_endonuc-II-like"/>
</dbReference>
<dbReference type="InterPro" id="IPR011856">
    <property type="entry name" value="tRNA_endonuc-like_dom_sf"/>
</dbReference>
<dbReference type="InterPro" id="IPR003509">
    <property type="entry name" value="UPF0102_YraN-like"/>
</dbReference>
<dbReference type="NCBIfam" id="NF009151">
    <property type="entry name" value="PRK12497.1-5"/>
    <property type="match status" value="1"/>
</dbReference>
<dbReference type="PANTHER" id="PTHR34039">
    <property type="entry name" value="UPF0102 PROTEIN YRAN"/>
    <property type="match status" value="1"/>
</dbReference>
<dbReference type="PANTHER" id="PTHR34039:SF1">
    <property type="entry name" value="UPF0102 PROTEIN YRAN"/>
    <property type="match status" value="1"/>
</dbReference>
<dbReference type="Pfam" id="PF02021">
    <property type="entry name" value="UPF0102"/>
    <property type="match status" value="1"/>
</dbReference>
<dbReference type="SUPFAM" id="SSF52980">
    <property type="entry name" value="Restriction endonuclease-like"/>
    <property type="match status" value="1"/>
</dbReference>
<feature type="chain" id="PRO_1000091256" description="UPF0102 protein Rleg2_4331">
    <location>
        <begin position="1"/>
        <end position="122"/>
    </location>
</feature>
<protein>
    <recommendedName>
        <fullName evidence="1">UPF0102 protein Rleg2_4331</fullName>
    </recommendedName>
</protein>
<reference key="1">
    <citation type="journal article" date="2010" name="Stand. Genomic Sci.">
        <title>Complete genome sequence of Rhizobium leguminosarum bv trifolii strain WSM2304, an effective microsymbiont of the South American clover Trifolium polymorphum.</title>
        <authorList>
            <person name="Reeve W."/>
            <person name="O'Hara G."/>
            <person name="Chain P."/>
            <person name="Ardley J."/>
            <person name="Brau L."/>
            <person name="Nandesena K."/>
            <person name="Tiwari R."/>
            <person name="Malfatti S."/>
            <person name="Kiss H."/>
            <person name="Lapidus A."/>
            <person name="Copeland A."/>
            <person name="Nolan M."/>
            <person name="Land M."/>
            <person name="Ivanova N."/>
            <person name="Mavromatis K."/>
            <person name="Markowitz V."/>
            <person name="Kyrpides N."/>
            <person name="Melino V."/>
            <person name="Denton M."/>
            <person name="Yates R."/>
            <person name="Howieson J."/>
        </authorList>
    </citation>
    <scope>NUCLEOTIDE SEQUENCE [LARGE SCALE GENOMIC DNA]</scope>
    <source>
        <strain>WSM2304</strain>
    </source>
</reference>
<accession>B5ZYH2</accession>
<evidence type="ECO:0000255" key="1">
    <source>
        <dbReference type="HAMAP-Rule" id="MF_00048"/>
    </source>
</evidence>